<dbReference type="EMBL" id="AY660566">
    <property type="protein sequence ID" value="AAT80714.1"/>
    <property type="molecule type" value="Genomic_DNA"/>
</dbReference>
<dbReference type="RefSeq" id="YP_209518.1">
    <property type="nucleotide sequence ID" value="NC_006861.1"/>
</dbReference>
<dbReference type="SMR" id="Q5SCW2"/>
<dbReference type="GeneID" id="3283721"/>
<dbReference type="GO" id="GO:0009535">
    <property type="term" value="C:chloroplast thylakoid membrane"/>
    <property type="evidence" value="ECO:0007669"/>
    <property type="project" value="UniProtKB-SubCell"/>
</dbReference>
<dbReference type="GO" id="GO:0009522">
    <property type="term" value="C:photosystem I"/>
    <property type="evidence" value="ECO:0007669"/>
    <property type="project" value="InterPro"/>
</dbReference>
<dbReference type="GO" id="GO:0015979">
    <property type="term" value="P:photosynthesis"/>
    <property type="evidence" value="ECO:0007669"/>
    <property type="project" value="UniProtKB-UniRule"/>
</dbReference>
<dbReference type="HAMAP" id="MF_00437">
    <property type="entry name" value="Ycf4"/>
    <property type="match status" value="1"/>
</dbReference>
<dbReference type="InterPro" id="IPR003359">
    <property type="entry name" value="PSI_Ycf4_assembly"/>
</dbReference>
<dbReference type="NCBIfam" id="NF002712">
    <property type="entry name" value="PRK02542.1"/>
    <property type="match status" value="1"/>
</dbReference>
<dbReference type="PANTHER" id="PTHR33288">
    <property type="match status" value="1"/>
</dbReference>
<dbReference type="PANTHER" id="PTHR33288:SF4">
    <property type="entry name" value="PHOTOSYSTEM I ASSEMBLY PROTEIN YCF4"/>
    <property type="match status" value="1"/>
</dbReference>
<dbReference type="Pfam" id="PF02392">
    <property type="entry name" value="Ycf4"/>
    <property type="match status" value="1"/>
</dbReference>
<sequence>MNWQSEWLRVEPIMGSRRISNFCWACITSLGALGFFLVGIPSYLGKDLIPVLPSQQIVFVPQGIVMCFYGIAGLFPSFYLWCTILWNVGSGYNIFDKREGIICLFRWGFPGENRRICIRFSMKDIQAIRVEVREAISPRRVLHMKVKGQQDVPLTRISENLTLREMEEKAAELARFLHVSMEGP</sequence>
<comment type="function">
    <text evidence="1">Seems to be required for the assembly of the photosystem I complex.</text>
</comment>
<comment type="subcellular location">
    <subcellularLocation>
        <location evidence="1">Plastid</location>
        <location evidence="1">Chloroplast thylakoid membrane</location>
        <topology evidence="1">Multi-pass membrane protein</topology>
    </subcellularLocation>
</comment>
<comment type="similarity">
    <text evidence="1">Belongs to the Ycf4 family.</text>
</comment>
<organism>
    <name type="scientific">Huperzia lucidula</name>
    <name type="common">Shining clubmoss</name>
    <name type="synonym">Lycopodium lucidulum</name>
    <dbReference type="NCBI Taxonomy" id="37429"/>
    <lineage>
        <taxon>Eukaryota</taxon>
        <taxon>Viridiplantae</taxon>
        <taxon>Streptophyta</taxon>
        <taxon>Embryophyta</taxon>
        <taxon>Tracheophyta</taxon>
        <taxon>Lycopodiopsida</taxon>
        <taxon>Lycopodiales</taxon>
        <taxon>Lycopodiaceae</taxon>
        <taxon>Huperzioideae</taxon>
        <taxon>Huperzia</taxon>
    </lineage>
</organism>
<evidence type="ECO:0000255" key="1">
    <source>
        <dbReference type="HAMAP-Rule" id="MF_00437"/>
    </source>
</evidence>
<geneLocation type="chloroplast"/>
<reference key="1">
    <citation type="journal article" date="2005" name="Gene">
        <title>The first complete chloroplast genome sequence of a lycophyte, Huperzia lucidula (Lycopodiaceae).</title>
        <authorList>
            <person name="Wolf P.G."/>
            <person name="Karol K.G."/>
            <person name="Mandoli D.F."/>
            <person name="Kuehl J.V."/>
            <person name="Arumuganathan K."/>
            <person name="Ellis M.W."/>
            <person name="Mishler B.D."/>
            <person name="Kelch D.G."/>
            <person name="Olmstead R.G."/>
            <person name="Boore J.L."/>
        </authorList>
    </citation>
    <scope>NUCLEOTIDE SEQUENCE [LARGE SCALE GENOMIC DNA]</scope>
</reference>
<feature type="chain" id="PRO_0000217609" description="Photosystem I assembly protein Ycf4">
    <location>
        <begin position="1"/>
        <end position="184"/>
    </location>
</feature>
<feature type="transmembrane region" description="Helical" evidence="1">
    <location>
        <begin position="22"/>
        <end position="42"/>
    </location>
</feature>
<feature type="transmembrane region" description="Helical" evidence="1">
    <location>
        <begin position="64"/>
        <end position="84"/>
    </location>
</feature>
<gene>
    <name evidence="1" type="primary">ycf4</name>
</gene>
<name>YCF4_HUPLU</name>
<accession>Q5SCW2</accession>
<proteinExistence type="inferred from homology"/>
<protein>
    <recommendedName>
        <fullName evidence="1">Photosystem I assembly protein Ycf4</fullName>
    </recommendedName>
</protein>
<keyword id="KW-0150">Chloroplast</keyword>
<keyword id="KW-0472">Membrane</keyword>
<keyword id="KW-0602">Photosynthesis</keyword>
<keyword id="KW-0934">Plastid</keyword>
<keyword id="KW-0793">Thylakoid</keyword>
<keyword id="KW-0812">Transmembrane</keyword>
<keyword id="KW-1133">Transmembrane helix</keyword>